<organism>
    <name type="scientific">Thermococcus gammatolerans (strain DSM 15229 / JCM 11827 / EJ3)</name>
    <dbReference type="NCBI Taxonomy" id="593117"/>
    <lineage>
        <taxon>Archaea</taxon>
        <taxon>Methanobacteriati</taxon>
        <taxon>Methanobacteriota</taxon>
        <taxon>Thermococci</taxon>
        <taxon>Thermococcales</taxon>
        <taxon>Thermococcaceae</taxon>
        <taxon>Thermococcus</taxon>
    </lineage>
</organism>
<keyword id="KW-0021">Allosteric enzyme</keyword>
<keyword id="KW-0328">Glycosyltransferase</keyword>
<keyword id="KW-0342">GTP-binding</keyword>
<keyword id="KW-0460">Magnesium</keyword>
<keyword id="KW-0547">Nucleotide-binding</keyword>
<keyword id="KW-1185">Reference proteome</keyword>
<keyword id="KW-0808">Transferase</keyword>
<dbReference type="EC" id="2.4.2.9" evidence="1"/>
<dbReference type="EMBL" id="CP001398">
    <property type="protein sequence ID" value="ACS33908.1"/>
    <property type="molecule type" value="Genomic_DNA"/>
</dbReference>
<dbReference type="RefSeq" id="WP_015859019.1">
    <property type="nucleotide sequence ID" value="NC_012804.1"/>
</dbReference>
<dbReference type="SMR" id="C5A6P6"/>
<dbReference type="STRING" id="593117.TGAM_1406"/>
<dbReference type="PaxDb" id="593117-TGAM_1406"/>
<dbReference type="GeneID" id="7988139"/>
<dbReference type="KEGG" id="tga:TGAM_1406"/>
<dbReference type="PATRIC" id="fig|593117.10.peg.1408"/>
<dbReference type="eggNOG" id="arCOG04128">
    <property type="taxonomic scope" value="Archaea"/>
</dbReference>
<dbReference type="HOGENOM" id="CLU_067096_2_0_2"/>
<dbReference type="OrthoDB" id="80352at2157"/>
<dbReference type="UniPathway" id="UPA00574">
    <property type="reaction ID" value="UER00636"/>
</dbReference>
<dbReference type="Proteomes" id="UP000001488">
    <property type="component" value="Chromosome"/>
</dbReference>
<dbReference type="GO" id="GO:0005525">
    <property type="term" value="F:GTP binding"/>
    <property type="evidence" value="ECO:0007669"/>
    <property type="project" value="UniProtKB-KW"/>
</dbReference>
<dbReference type="GO" id="GO:0000287">
    <property type="term" value="F:magnesium ion binding"/>
    <property type="evidence" value="ECO:0007669"/>
    <property type="project" value="UniProtKB-UniRule"/>
</dbReference>
<dbReference type="GO" id="GO:0004845">
    <property type="term" value="F:uracil phosphoribosyltransferase activity"/>
    <property type="evidence" value="ECO:0007669"/>
    <property type="project" value="UniProtKB-UniRule"/>
</dbReference>
<dbReference type="GO" id="GO:0044206">
    <property type="term" value="P:UMP salvage"/>
    <property type="evidence" value="ECO:0007669"/>
    <property type="project" value="UniProtKB-UniRule"/>
</dbReference>
<dbReference type="GO" id="GO:0006223">
    <property type="term" value="P:uracil salvage"/>
    <property type="evidence" value="ECO:0007669"/>
    <property type="project" value="InterPro"/>
</dbReference>
<dbReference type="CDD" id="cd06223">
    <property type="entry name" value="PRTases_typeI"/>
    <property type="match status" value="1"/>
</dbReference>
<dbReference type="Gene3D" id="3.40.50.2020">
    <property type="match status" value="1"/>
</dbReference>
<dbReference type="HAMAP" id="MF_01218_A">
    <property type="entry name" value="Upp_A"/>
    <property type="match status" value="1"/>
</dbReference>
<dbReference type="InterPro" id="IPR000836">
    <property type="entry name" value="PRibTrfase_dom"/>
</dbReference>
<dbReference type="InterPro" id="IPR029057">
    <property type="entry name" value="PRTase-like"/>
</dbReference>
<dbReference type="InterPro" id="IPR034331">
    <property type="entry name" value="Upp_A"/>
</dbReference>
<dbReference type="InterPro" id="IPR005765">
    <property type="entry name" value="Ura_phspho_trans"/>
</dbReference>
<dbReference type="NCBIfam" id="NF001097">
    <property type="entry name" value="PRK00129.1"/>
    <property type="match status" value="1"/>
</dbReference>
<dbReference type="NCBIfam" id="TIGR01091">
    <property type="entry name" value="upp"/>
    <property type="match status" value="1"/>
</dbReference>
<dbReference type="Pfam" id="PF14681">
    <property type="entry name" value="UPRTase"/>
    <property type="match status" value="1"/>
</dbReference>
<dbReference type="SUPFAM" id="SSF53271">
    <property type="entry name" value="PRTase-like"/>
    <property type="match status" value="1"/>
</dbReference>
<accession>C5A6P6</accession>
<reference key="1">
    <citation type="journal article" date="2007" name="Genome Biol.">
        <title>Genome analysis and genome-wide proteomics of Thermococcus gammatolerans, the most radioresistant organism known amongst the Archaea.</title>
        <authorList>
            <person name="Zivanovic Y."/>
            <person name="Armengaud J."/>
            <person name="Lagorce A."/>
            <person name="Leplat C."/>
            <person name="Guerin P."/>
            <person name="Dutertre M."/>
            <person name="Anthouard V."/>
            <person name="Forterre P."/>
            <person name="Wincker P."/>
            <person name="Confalonieri F."/>
        </authorList>
    </citation>
    <scope>NUCLEOTIDE SEQUENCE [LARGE SCALE GENOMIC DNA]</scope>
    <source>
        <strain>DSM 15229 / JCM 11827 / EJ3</strain>
    </source>
</reference>
<proteinExistence type="inferred from homology"/>
<name>UPP_THEGJ</name>
<gene>
    <name evidence="1" type="primary">upp</name>
    <name type="ordered locus">TGAM_1406</name>
</gene>
<comment type="function">
    <text evidence="1">Catalyzes the conversion of uracil and 5-phospho-alpha-D-ribose 1-diphosphate (PRPP) to UMP and diphosphate.</text>
</comment>
<comment type="catalytic activity">
    <reaction evidence="1">
        <text>UMP + diphosphate = 5-phospho-alpha-D-ribose 1-diphosphate + uracil</text>
        <dbReference type="Rhea" id="RHEA:13017"/>
        <dbReference type="ChEBI" id="CHEBI:17568"/>
        <dbReference type="ChEBI" id="CHEBI:33019"/>
        <dbReference type="ChEBI" id="CHEBI:57865"/>
        <dbReference type="ChEBI" id="CHEBI:58017"/>
        <dbReference type="EC" id="2.4.2.9"/>
    </reaction>
</comment>
<comment type="cofactor">
    <cofactor evidence="1">
        <name>Mg(2+)</name>
        <dbReference type="ChEBI" id="CHEBI:18420"/>
    </cofactor>
    <text evidence="1">Binds 1 Mg(2+) ion per subunit. The magnesium is bound as Mg-PRPP.</text>
</comment>
<comment type="activity regulation">
    <text evidence="1">Allosterically activated by GTP.</text>
</comment>
<comment type="pathway">
    <text evidence="1">Pyrimidine metabolism; UMP biosynthesis via salvage pathway; UMP from uracil: step 1/1.</text>
</comment>
<comment type="similarity">
    <text evidence="1">Belongs to the UPRTase family.</text>
</comment>
<protein>
    <recommendedName>
        <fullName evidence="1">Uracil phosphoribosyltransferase</fullName>
        <ecNumber evidence="1">2.4.2.9</ecNumber>
    </recommendedName>
    <alternativeName>
        <fullName evidence="1">UMP pyrophosphorylase</fullName>
    </alternativeName>
    <alternativeName>
        <fullName evidence="1">UPRTase</fullName>
    </alternativeName>
</protein>
<sequence length="224" mass="25143">MRRDERWDGVYSFEDSPFIMEILTELRDKNTDSIAFRKGLVKLGRYMGYELTKTMDVEEIEVETPLEKTRGILVKDRRNVVIITVLRAAIPLMEGLIKVFEHARVGIVSASRGKAPKFEIEMNYIKIPTVKPDDTVIVADPMIATGSTLIRVLKEVSKYGRPKRLIILGVLAAPEGISRIKEAFPEAEIFVAKVDRELNEKGYILPGLGDAGDRAFGAPLKSPR</sequence>
<feature type="chain" id="PRO_1000213945" description="Uracil phosphoribosyltransferase">
    <location>
        <begin position="1"/>
        <end position="224"/>
    </location>
</feature>
<feature type="binding site" evidence="1">
    <location>
        <begin position="38"/>
        <end position="42"/>
    </location>
    <ligand>
        <name>GTP</name>
        <dbReference type="ChEBI" id="CHEBI:37565"/>
    </ligand>
</feature>
<feature type="binding site" evidence="1">
    <location>
        <position position="87"/>
    </location>
    <ligand>
        <name>5-phospho-alpha-D-ribose 1-diphosphate</name>
        <dbReference type="ChEBI" id="CHEBI:58017"/>
    </ligand>
</feature>
<feature type="binding site" evidence="1">
    <location>
        <position position="112"/>
    </location>
    <ligand>
        <name>5-phospho-alpha-D-ribose 1-diphosphate</name>
        <dbReference type="ChEBI" id="CHEBI:58017"/>
    </ligand>
</feature>
<feature type="binding site" evidence="1">
    <location>
        <begin position="140"/>
        <end position="148"/>
    </location>
    <ligand>
        <name>5-phospho-alpha-D-ribose 1-diphosphate</name>
        <dbReference type="ChEBI" id="CHEBI:58017"/>
    </ligand>
</feature>
<feature type="binding site" evidence="1">
    <location>
        <position position="204"/>
    </location>
    <ligand>
        <name>uracil</name>
        <dbReference type="ChEBI" id="CHEBI:17568"/>
    </ligand>
</feature>
<feature type="binding site" evidence="1">
    <location>
        <begin position="209"/>
        <end position="211"/>
    </location>
    <ligand>
        <name>uracil</name>
        <dbReference type="ChEBI" id="CHEBI:17568"/>
    </ligand>
</feature>
<feature type="binding site" evidence="1">
    <location>
        <position position="210"/>
    </location>
    <ligand>
        <name>5-phospho-alpha-D-ribose 1-diphosphate</name>
        <dbReference type="ChEBI" id="CHEBI:58017"/>
    </ligand>
</feature>
<evidence type="ECO:0000255" key="1">
    <source>
        <dbReference type="HAMAP-Rule" id="MF_01218"/>
    </source>
</evidence>